<name>LPTB_HAEIN</name>
<feature type="chain" id="PRO_0000093182" description="Lipopolysaccharide export system ATP-binding protein LptB">
    <location>
        <begin position="1"/>
        <end position="241"/>
    </location>
</feature>
<feature type="domain" description="ABC transporter" evidence="2">
    <location>
        <begin position="4"/>
        <end position="237"/>
    </location>
</feature>
<feature type="binding site" evidence="2">
    <location>
        <begin position="36"/>
        <end position="43"/>
    </location>
    <ligand>
        <name>ATP</name>
        <dbReference type="ChEBI" id="CHEBI:30616"/>
    </ligand>
</feature>
<organism>
    <name type="scientific">Haemophilus influenzae (strain ATCC 51907 / DSM 11121 / KW20 / Rd)</name>
    <dbReference type="NCBI Taxonomy" id="71421"/>
    <lineage>
        <taxon>Bacteria</taxon>
        <taxon>Pseudomonadati</taxon>
        <taxon>Pseudomonadota</taxon>
        <taxon>Gammaproteobacteria</taxon>
        <taxon>Pasteurellales</taxon>
        <taxon>Pasteurellaceae</taxon>
        <taxon>Haemophilus</taxon>
    </lineage>
</organism>
<gene>
    <name type="primary">lptB</name>
    <name type="ordered locus">HI_1148</name>
</gene>
<proteinExistence type="evidence at protein level"/>
<dbReference type="EC" id="7.5.2.-"/>
<dbReference type="EMBL" id="L42023">
    <property type="protein sequence ID" value="AAC22803.1"/>
    <property type="molecule type" value="Genomic_DNA"/>
</dbReference>
<dbReference type="PIR" id="I64167">
    <property type="entry name" value="I64167"/>
</dbReference>
<dbReference type="RefSeq" id="NP_439306.1">
    <property type="nucleotide sequence ID" value="NC_000907.1"/>
</dbReference>
<dbReference type="SMR" id="P45073"/>
<dbReference type="STRING" id="71421.HI_1148"/>
<dbReference type="EnsemblBacteria" id="AAC22803">
    <property type="protein sequence ID" value="AAC22803"/>
    <property type="gene ID" value="HI_1148"/>
</dbReference>
<dbReference type="KEGG" id="hin:HI_1148"/>
<dbReference type="PATRIC" id="fig|71421.8.peg.1198"/>
<dbReference type="eggNOG" id="COG1137">
    <property type="taxonomic scope" value="Bacteria"/>
</dbReference>
<dbReference type="HOGENOM" id="CLU_000604_1_2_6"/>
<dbReference type="OrthoDB" id="9781337at2"/>
<dbReference type="PhylomeDB" id="P45073"/>
<dbReference type="BioCyc" id="HINF71421:G1GJ1-1181-MONOMER"/>
<dbReference type="Proteomes" id="UP000000579">
    <property type="component" value="Chromosome"/>
</dbReference>
<dbReference type="GO" id="GO:0043190">
    <property type="term" value="C:ATP-binding cassette (ABC) transporter complex"/>
    <property type="evidence" value="ECO:0007669"/>
    <property type="project" value="InterPro"/>
</dbReference>
<dbReference type="GO" id="GO:0005737">
    <property type="term" value="C:cytoplasm"/>
    <property type="evidence" value="ECO:0007669"/>
    <property type="project" value="UniProtKB-SubCell"/>
</dbReference>
<dbReference type="GO" id="GO:0005886">
    <property type="term" value="C:plasma membrane"/>
    <property type="evidence" value="ECO:0000318"/>
    <property type="project" value="GO_Central"/>
</dbReference>
<dbReference type="GO" id="GO:0005524">
    <property type="term" value="F:ATP binding"/>
    <property type="evidence" value="ECO:0007669"/>
    <property type="project" value="UniProtKB-KW"/>
</dbReference>
<dbReference type="GO" id="GO:0016887">
    <property type="term" value="F:ATP hydrolysis activity"/>
    <property type="evidence" value="ECO:0007669"/>
    <property type="project" value="InterPro"/>
</dbReference>
<dbReference type="GO" id="GO:0055085">
    <property type="term" value="P:transmembrane transport"/>
    <property type="evidence" value="ECO:0007669"/>
    <property type="project" value="InterPro"/>
</dbReference>
<dbReference type="CDD" id="cd03218">
    <property type="entry name" value="ABC_YhbG"/>
    <property type="match status" value="1"/>
</dbReference>
<dbReference type="FunFam" id="3.40.50.300:FF:000151">
    <property type="entry name" value="Lipopolysaccharide ABC transporter ATP-binding protein"/>
    <property type="match status" value="1"/>
</dbReference>
<dbReference type="Gene3D" id="3.40.50.300">
    <property type="entry name" value="P-loop containing nucleotide triphosphate hydrolases"/>
    <property type="match status" value="1"/>
</dbReference>
<dbReference type="InterPro" id="IPR003593">
    <property type="entry name" value="AAA+_ATPase"/>
</dbReference>
<dbReference type="InterPro" id="IPR051120">
    <property type="entry name" value="ABC_AA/LPS_Transport"/>
</dbReference>
<dbReference type="InterPro" id="IPR003439">
    <property type="entry name" value="ABC_transporter-like_ATP-bd"/>
</dbReference>
<dbReference type="InterPro" id="IPR017871">
    <property type="entry name" value="ABC_transporter-like_CS"/>
</dbReference>
<dbReference type="InterPro" id="IPR032823">
    <property type="entry name" value="BCA_ABC_TP_C"/>
</dbReference>
<dbReference type="InterPro" id="IPR030921">
    <property type="entry name" value="LPS_export_LptB"/>
</dbReference>
<dbReference type="InterPro" id="IPR027417">
    <property type="entry name" value="P-loop_NTPase"/>
</dbReference>
<dbReference type="NCBIfam" id="TIGR04406">
    <property type="entry name" value="LPS_export_lptB"/>
    <property type="match status" value="1"/>
</dbReference>
<dbReference type="NCBIfam" id="NF008144">
    <property type="entry name" value="PRK10895.1"/>
    <property type="match status" value="1"/>
</dbReference>
<dbReference type="PANTHER" id="PTHR45772">
    <property type="entry name" value="CONSERVED COMPONENT OF ABC TRANSPORTER FOR NATURAL AMINO ACIDS-RELATED"/>
    <property type="match status" value="1"/>
</dbReference>
<dbReference type="PANTHER" id="PTHR45772:SF10">
    <property type="entry name" value="LIPOPOLYSACCHARIDE EXPORT SYSTEM ATP-BINDING PROTEIN LPTB"/>
    <property type="match status" value="1"/>
</dbReference>
<dbReference type="Pfam" id="PF00005">
    <property type="entry name" value="ABC_tran"/>
    <property type="match status" value="1"/>
</dbReference>
<dbReference type="Pfam" id="PF12399">
    <property type="entry name" value="BCA_ABC_TP_C"/>
    <property type="match status" value="1"/>
</dbReference>
<dbReference type="SMART" id="SM00382">
    <property type="entry name" value="AAA"/>
    <property type="match status" value="1"/>
</dbReference>
<dbReference type="SUPFAM" id="SSF52540">
    <property type="entry name" value="P-loop containing nucleoside triphosphate hydrolases"/>
    <property type="match status" value="1"/>
</dbReference>
<dbReference type="PROSITE" id="PS00211">
    <property type="entry name" value="ABC_TRANSPORTER_1"/>
    <property type="match status" value="1"/>
</dbReference>
<dbReference type="PROSITE" id="PS50893">
    <property type="entry name" value="ABC_TRANSPORTER_2"/>
    <property type="match status" value="1"/>
</dbReference>
<sequence length="241" mass="26814">MSILTAENLAKSYKSRKVVSDVSLTVNSNEIVGLLGPNGAGKTTTFYMVVGLVRQDQGKIVIDGEDISLLPMHNRAQRGIGYLPQEASIFRRLTVYENLMAVLEIRKDLTPQQRREKADELIEEFNISHIRDNLGQALSGGERRRVEIARALAANPKFILLDEPFAGVDPISVSDIKKIITDLRNRGLGVLITDHNVRETLDVCERAYIVGAGKIIATGTPEQVMNDEQVKRVYLGEQFKL</sequence>
<comment type="function">
    <text evidence="1">Part of the ABC transporter complex LptBFG involved in the translocation of lipopolysaccharide (LPS) from the inner membrane to the outer membrane. Probably responsible for energy coupling to the transport system (By similarity).</text>
</comment>
<comment type="subunit">
    <text evidence="1">Component of the lipopolysaccharide transport and assembly complex. The LptBFG transporter is composed of two ATP-binding proteins (LptB) and two transmembrane proteins (LptF and LptG) (By similarity).</text>
</comment>
<comment type="subcellular location">
    <subcellularLocation>
        <location>Cytoplasm</location>
    </subcellularLocation>
    <subcellularLocation>
        <location evidence="1">Cell inner membrane</location>
        <topology evidence="1">Peripheral membrane protein</topology>
        <orientation evidence="1">Cytoplasmic side</orientation>
    </subcellularLocation>
</comment>
<comment type="similarity">
    <text evidence="3">Belongs to the ABC transporter superfamily. Outer membrane lipopolysaccharide export (TC 1.B.42) family.</text>
</comment>
<accession>P45073</accession>
<reference key="1">
    <citation type="journal article" date="1995" name="Science">
        <title>Whole-genome random sequencing and assembly of Haemophilus influenzae Rd.</title>
        <authorList>
            <person name="Fleischmann R.D."/>
            <person name="Adams M.D."/>
            <person name="White O."/>
            <person name="Clayton R.A."/>
            <person name="Kirkness E.F."/>
            <person name="Kerlavage A.R."/>
            <person name="Bult C.J."/>
            <person name="Tomb J.-F."/>
            <person name="Dougherty B.A."/>
            <person name="Merrick J.M."/>
            <person name="McKenney K."/>
            <person name="Sutton G.G."/>
            <person name="FitzHugh W."/>
            <person name="Fields C.A."/>
            <person name="Gocayne J.D."/>
            <person name="Scott J.D."/>
            <person name="Shirley R."/>
            <person name="Liu L.-I."/>
            <person name="Glodek A."/>
            <person name="Kelley J.M."/>
            <person name="Weidman J.F."/>
            <person name="Phillips C.A."/>
            <person name="Spriggs T."/>
            <person name="Hedblom E."/>
            <person name="Cotton M.D."/>
            <person name="Utterback T.R."/>
            <person name="Hanna M.C."/>
            <person name="Nguyen D.T."/>
            <person name="Saudek D.M."/>
            <person name="Brandon R.C."/>
            <person name="Fine L.D."/>
            <person name="Fritchman J.L."/>
            <person name="Fuhrmann J.L."/>
            <person name="Geoghagen N.S.M."/>
            <person name="Gnehm C.L."/>
            <person name="McDonald L.A."/>
            <person name="Small K.V."/>
            <person name="Fraser C.M."/>
            <person name="Smith H.O."/>
            <person name="Venter J.C."/>
        </authorList>
    </citation>
    <scope>NUCLEOTIDE SEQUENCE [LARGE SCALE GENOMIC DNA]</scope>
    <source>
        <strain>ATCC 51907 / DSM 11121 / KW20 / Rd</strain>
    </source>
</reference>
<reference key="2">
    <citation type="journal article" date="2000" name="Electrophoresis">
        <title>Two-dimensional map of the proteome of Haemophilus influenzae.</title>
        <authorList>
            <person name="Langen H."/>
            <person name="Takacs B."/>
            <person name="Evers S."/>
            <person name="Berndt P."/>
            <person name="Lahm H.W."/>
            <person name="Wipf B."/>
            <person name="Gray C."/>
            <person name="Fountoulakis M."/>
        </authorList>
    </citation>
    <scope>IDENTIFICATION BY MASS SPECTROMETRY</scope>
    <source>
        <strain>ATCC 51907 / DSM 11121 / KW20 / Rd</strain>
    </source>
</reference>
<keyword id="KW-0067">ATP-binding</keyword>
<keyword id="KW-0997">Cell inner membrane</keyword>
<keyword id="KW-1003">Cell membrane</keyword>
<keyword id="KW-0963">Cytoplasm</keyword>
<keyword id="KW-0472">Membrane</keyword>
<keyword id="KW-0547">Nucleotide-binding</keyword>
<keyword id="KW-1185">Reference proteome</keyword>
<keyword id="KW-1278">Translocase</keyword>
<keyword id="KW-0813">Transport</keyword>
<evidence type="ECO:0000250" key="1"/>
<evidence type="ECO:0000255" key="2">
    <source>
        <dbReference type="PROSITE-ProRule" id="PRU00434"/>
    </source>
</evidence>
<evidence type="ECO:0000305" key="3"/>
<protein>
    <recommendedName>
        <fullName>Lipopolysaccharide export system ATP-binding protein LptB</fullName>
        <ecNumber>7.5.2.-</ecNumber>
    </recommendedName>
</protein>